<proteinExistence type="inferred from homology"/>
<sequence>MAETKEQTDDVETLMASLDQLGMEADPTSKEFNNDDSKIGAPSEVQDEKELLEFLDQLENDEEKNEKNPIEEANEENESVAATSNERQQHDASNQPSQAAQTTINKNTESATPKTVNEINKSQEFQEHVETPKQSNWLGGFWSTASAAVRSAEQRVRSIKGFEENANWDINVRNMVDLNKLGDLSNGIRSKALPTLSNTIHNVLNVVAPPIHDHEVLQVTVFHDLAGFAHLDRIVYESFEKVMFQVEGGELTVLLDKEAKVRPRTNDVYEDFGLCNGYLEAKKLAKANLAEPITEAKKMNKENKQENVGAGDDEDASESPMVRVTHLLLVIQAFTIKNKEVSDDEQLCFLIHLNDTNHNLEFSTTSQPLPLEWQRWAVDPRYIKLFGSNAILPNEWVTEWVEQSISVAAGIVAQMYTSKRMALGDPSLFAGLPEEDVNTGSSETPVPYYDGAMYA</sequence>
<reference key="1">
    <citation type="journal article" date="2002" name="Nature">
        <title>The genome sequence of Schizosaccharomyces pombe.</title>
        <authorList>
            <person name="Wood V."/>
            <person name="Gwilliam R."/>
            <person name="Rajandream M.A."/>
            <person name="Lyne M.H."/>
            <person name="Lyne R."/>
            <person name="Stewart A."/>
            <person name="Sgouros J.G."/>
            <person name="Peat N."/>
            <person name="Hayles J."/>
            <person name="Baker S.G."/>
            <person name="Basham D."/>
            <person name="Bowman S."/>
            <person name="Brooks K."/>
            <person name="Brown D."/>
            <person name="Brown S."/>
            <person name="Chillingworth T."/>
            <person name="Churcher C.M."/>
            <person name="Collins M."/>
            <person name="Connor R."/>
            <person name="Cronin A."/>
            <person name="Davis P."/>
            <person name="Feltwell T."/>
            <person name="Fraser A."/>
            <person name="Gentles S."/>
            <person name="Goble A."/>
            <person name="Hamlin N."/>
            <person name="Harris D.E."/>
            <person name="Hidalgo J."/>
            <person name="Hodgson G."/>
            <person name="Holroyd S."/>
            <person name="Hornsby T."/>
            <person name="Howarth S."/>
            <person name="Huckle E.J."/>
            <person name="Hunt S."/>
            <person name="Jagels K."/>
            <person name="James K.D."/>
            <person name="Jones L."/>
            <person name="Jones M."/>
            <person name="Leather S."/>
            <person name="McDonald S."/>
            <person name="McLean J."/>
            <person name="Mooney P."/>
            <person name="Moule S."/>
            <person name="Mungall K.L."/>
            <person name="Murphy L.D."/>
            <person name="Niblett D."/>
            <person name="Odell C."/>
            <person name="Oliver K."/>
            <person name="O'Neil S."/>
            <person name="Pearson D."/>
            <person name="Quail M.A."/>
            <person name="Rabbinowitsch E."/>
            <person name="Rutherford K.M."/>
            <person name="Rutter S."/>
            <person name="Saunders D."/>
            <person name="Seeger K."/>
            <person name="Sharp S."/>
            <person name="Skelton J."/>
            <person name="Simmonds M.N."/>
            <person name="Squares R."/>
            <person name="Squares S."/>
            <person name="Stevens K."/>
            <person name="Taylor K."/>
            <person name="Taylor R.G."/>
            <person name="Tivey A."/>
            <person name="Walsh S.V."/>
            <person name="Warren T."/>
            <person name="Whitehead S."/>
            <person name="Woodward J.R."/>
            <person name="Volckaert G."/>
            <person name="Aert R."/>
            <person name="Robben J."/>
            <person name="Grymonprez B."/>
            <person name="Weltjens I."/>
            <person name="Vanstreels E."/>
            <person name="Rieger M."/>
            <person name="Schaefer M."/>
            <person name="Mueller-Auer S."/>
            <person name="Gabel C."/>
            <person name="Fuchs M."/>
            <person name="Duesterhoeft A."/>
            <person name="Fritzc C."/>
            <person name="Holzer E."/>
            <person name="Moestl D."/>
            <person name="Hilbert H."/>
            <person name="Borzym K."/>
            <person name="Langer I."/>
            <person name="Beck A."/>
            <person name="Lehrach H."/>
            <person name="Reinhardt R."/>
            <person name="Pohl T.M."/>
            <person name="Eger P."/>
            <person name="Zimmermann W."/>
            <person name="Wedler H."/>
            <person name="Wambutt R."/>
            <person name="Purnelle B."/>
            <person name="Goffeau A."/>
            <person name="Cadieu E."/>
            <person name="Dreano S."/>
            <person name="Gloux S."/>
            <person name="Lelaure V."/>
            <person name="Mottier S."/>
            <person name="Galibert F."/>
            <person name="Aves S.J."/>
            <person name="Xiang Z."/>
            <person name="Hunt C."/>
            <person name="Moore K."/>
            <person name="Hurst S.M."/>
            <person name="Lucas M."/>
            <person name="Rochet M."/>
            <person name="Gaillardin C."/>
            <person name="Tallada V.A."/>
            <person name="Garzon A."/>
            <person name="Thode G."/>
            <person name="Daga R.R."/>
            <person name="Cruzado L."/>
            <person name="Jimenez J."/>
            <person name="Sanchez M."/>
            <person name="del Rey F."/>
            <person name="Benito J."/>
            <person name="Dominguez A."/>
            <person name="Revuelta J.L."/>
            <person name="Moreno S."/>
            <person name="Armstrong J."/>
            <person name="Forsburg S.L."/>
            <person name="Cerutti L."/>
            <person name="Lowe T."/>
            <person name="McCombie W.R."/>
            <person name="Paulsen I."/>
            <person name="Potashkin J."/>
            <person name="Shpakovski G.V."/>
            <person name="Ussery D."/>
            <person name="Barrell B.G."/>
            <person name="Nurse P."/>
        </authorList>
    </citation>
    <scope>NUCLEOTIDE SEQUENCE [LARGE SCALE GENOMIC DNA]</scope>
    <source>
        <strain>972 / ATCC 24843</strain>
    </source>
</reference>
<reference key="2">
    <citation type="journal article" date="2006" name="Nat. Biotechnol.">
        <title>ORFeome cloning and global analysis of protein localization in the fission yeast Schizosaccharomyces pombe.</title>
        <authorList>
            <person name="Matsuyama A."/>
            <person name="Arai R."/>
            <person name="Yashiroda Y."/>
            <person name="Shirai A."/>
            <person name="Kamata A."/>
            <person name="Sekido S."/>
            <person name="Kobayashi Y."/>
            <person name="Hashimoto A."/>
            <person name="Hamamoto M."/>
            <person name="Hiraoka Y."/>
            <person name="Horinouchi S."/>
            <person name="Yoshida M."/>
        </authorList>
    </citation>
    <scope>SUBCELLULAR LOCATION [LARGE SCALE ANALYSIS]</scope>
</reference>
<accession>O94548</accession>
<evidence type="ECO:0000250" key="1"/>
<evidence type="ECO:0000256" key="2">
    <source>
        <dbReference type="SAM" id="MobiDB-lite"/>
    </source>
</evidence>
<evidence type="ECO:0000269" key="3">
    <source>
    </source>
</evidence>
<evidence type="ECO:0000305" key="4"/>
<protein>
    <recommendedName>
        <fullName>Maintenance of telomere capping protein 1</fullName>
    </recommendedName>
</protein>
<gene>
    <name type="ORF">SPCC1322.09</name>
</gene>
<dbReference type="EMBL" id="CU329672">
    <property type="protein sequence ID" value="CAA22862.1"/>
    <property type="molecule type" value="Genomic_DNA"/>
</dbReference>
<dbReference type="PIR" id="T40940">
    <property type="entry name" value="T40940"/>
</dbReference>
<dbReference type="RefSeq" id="NP_588137.1">
    <property type="nucleotide sequence ID" value="NM_001023127.2"/>
</dbReference>
<dbReference type="SMR" id="O94548"/>
<dbReference type="BioGRID" id="275472">
    <property type="interactions" value="1"/>
</dbReference>
<dbReference type="FunCoup" id="O94548">
    <property type="interactions" value="9"/>
</dbReference>
<dbReference type="STRING" id="284812.O94548"/>
<dbReference type="iPTMnet" id="O94548"/>
<dbReference type="PaxDb" id="4896-SPCC1322.09.1"/>
<dbReference type="EnsemblFungi" id="SPCC1322.09.1">
    <property type="protein sequence ID" value="SPCC1322.09.1:pep"/>
    <property type="gene ID" value="SPCC1322.09"/>
</dbReference>
<dbReference type="KEGG" id="spo:2538894"/>
<dbReference type="PomBase" id="SPCC1322.09"/>
<dbReference type="VEuPathDB" id="FungiDB:SPCC1322.09"/>
<dbReference type="eggNOG" id="ENOG502QU4J">
    <property type="taxonomic scope" value="Eukaryota"/>
</dbReference>
<dbReference type="HOGENOM" id="CLU_034224_0_1_1"/>
<dbReference type="InParanoid" id="O94548"/>
<dbReference type="OMA" id="RIHLVHD"/>
<dbReference type="PhylomeDB" id="O94548"/>
<dbReference type="PRO" id="PR:O94548"/>
<dbReference type="Proteomes" id="UP000002485">
    <property type="component" value="Chromosome III"/>
</dbReference>
<dbReference type="GO" id="GO:0005794">
    <property type="term" value="C:Golgi apparatus"/>
    <property type="evidence" value="ECO:0000266"/>
    <property type="project" value="PomBase"/>
</dbReference>
<dbReference type="InterPro" id="IPR018814">
    <property type="entry name" value="DUF5427"/>
</dbReference>
<dbReference type="PANTHER" id="PTHR28265">
    <property type="entry name" value="MAINTENANCE OF TELOMERE CAPPING PROTEIN 1"/>
    <property type="match status" value="1"/>
</dbReference>
<dbReference type="PANTHER" id="PTHR28265:SF1">
    <property type="entry name" value="MAINTENANCE OF TELOMERE CAPPING PROTEIN 1"/>
    <property type="match status" value="1"/>
</dbReference>
<dbReference type="Pfam" id="PF10310">
    <property type="entry name" value="DUF5427"/>
    <property type="match status" value="1"/>
</dbReference>
<name>MTC1_SCHPO</name>
<organism>
    <name type="scientific">Schizosaccharomyces pombe (strain 972 / ATCC 24843)</name>
    <name type="common">Fission yeast</name>
    <dbReference type="NCBI Taxonomy" id="284812"/>
    <lineage>
        <taxon>Eukaryota</taxon>
        <taxon>Fungi</taxon>
        <taxon>Dikarya</taxon>
        <taxon>Ascomycota</taxon>
        <taxon>Taphrinomycotina</taxon>
        <taxon>Schizosaccharomycetes</taxon>
        <taxon>Schizosaccharomycetales</taxon>
        <taxon>Schizosaccharomycetaceae</taxon>
        <taxon>Schizosaccharomyces</taxon>
    </lineage>
</organism>
<comment type="function">
    <text evidence="1">Involved in telomere capping.</text>
</comment>
<comment type="subcellular location">
    <subcellularLocation>
        <location evidence="3">Cytoplasm</location>
    </subcellularLocation>
</comment>
<comment type="similarity">
    <text evidence="4">Belongs to the MTC1 family.</text>
</comment>
<feature type="chain" id="PRO_0000343155" description="Maintenance of telomere capping protein 1">
    <location>
        <begin position="1"/>
        <end position="455"/>
    </location>
</feature>
<feature type="region of interest" description="Disordered" evidence="2">
    <location>
        <begin position="1"/>
        <end position="113"/>
    </location>
</feature>
<feature type="region of interest" description="Disordered" evidence="2">
    <location>
        <begin position="296"/>
        <end position="317"/>
    </location>
</feature>
<feature type="compositionally biased region" description="Basic and acidic residues" evidence="2">
    <location>
        <begin position="27"/>
        <end position="38"/>
    </location>
</feature>
<feature type="compositionally biased region" description="Polar residues" evidence="2">
    <location>
        <begin position="80"/>
        <end position="113"/>
    </location>
</feature>
<feature type="compositionally biased region" description="Basic and acidic residues" evidence="2">
    <location>
        <begin position="296"/>
        <end position="305"/>
    </location>
</feature>
<keyword id="KW-0963">Cytoplasm</keyword>
<keyword id="KW-1185">Reference proteome</keyword>